<evidence type="ECO:0000305" key="1"/>
<name>UN02_PINPS</name>
<feature type="chain" id="PRO_0000055554" description="Unknown protein from 2D-PAGE of needles">
    <location>
        <begin position="1" status="less than"/>
        <end position="13" status="greater than"/>
    </location>
</feature>
<feature type="non-consecutive residues" evidence="1">
    <location>
        <begin position="7"/>
        <end position="8"/>
    </location>
</feature>
<feature type="non-terminal residue">
    <location>
        <position position="1"/>
    </location>
</feature>
<feature type="non-terminal residue">
    <location>
        <position position="13"/>
    </location>
</feature>
<comment type="induction">
    <text>By water stress.</text>
</comment>
<comment type="miscellaneous">
    <text>On the 2D-gel the determined pI of this unknown protein is: 5.4, its MW is: 43 kDa.</text>
</comment>
<reference key="1">
    <citation type="journal article" date="1999" name="Electrophoresis">
        <title>Separation and characterization of needle and xylem maritime pine proteins.</title>
        <authorList>
            <person name="Costa P."/>
            <person name="Pionneau C."/>
            <person name="Bauw G."/>
            <person name="Dubos C."/>
            <person name="Bahrman N."/>
            <person name="Kremer A."/>
            <person name="Frigerio J.-M."/>
            <person name="Plomion C."/>
        </authorList>
    </citation>
    <scope>PROTEIN SEQUENCE</scope>
    <source>
        <tissue>Needle</tissue>
    </source>
</reference>
<keyword id="KW-0903">Direct protein sequencing</keyword>
<keyword id="KW-0346">Stress response</keyword>
<protein>
    <recommendedName>
        <fullName>Unknown protein from 2D-PAGE of needles</fullName>
    </recommendedName>
    <alternativeName>
        <fullName>N55</fullName>
    </alternativeName>
</protein>
<accession>P81667</accession>
<organism>
    <name type="scientific">Pinus pinaster</name>
    <name type="common">Maritime pine</name>
    <dbReference type="NCBI Taxonomy" id="71647"/>
    <lineage>
        <taxon>Eukaryota</taxon>
        <taxon>Viridiplantae</taxon>
        <taxon>Streptophyta</taxon>
        <taxon>Embryophyta</taxon>
        <taxon>Tracheophyta</taxon>
        <taxon>Spermatophyta</taxon>
        <taxon>Pinopsida</taxon>
        <taxon>Pinidae</taxon>
        <taxon>Conifers I</taxon>
        <taxon>Pinales</taxon>
        <taxon>Pinaceae</taxon>
        <taxon>Pinus</taxon>
        <taxon>Pinus subgen. Pinus</taxon>
    </lineage>
</organism>
<proteinExistence type="evidence at protein level"/>
<sequence length="13" mass="1559">FYSAPTRDNVFEL</sequence>